<proteinExistence type="inferred from homology"/>
<accession>Q2RMW0</accession>
<dbReference type="EC" id="4.2.3.4" evidence="1"/>
<dbReference type="EMBL" id="CP000230">
    <property type="protein sequence ID" value="ABC24535.1"/>
    <property type="molecule type" value="Genomic_DNA"/>
</dbReference>
<dbReference type="RefSeq" id="WP_011391488.1">
    <property type="nucleotide sequence ID" value="NC_007643.1"/>
</dbReference>
<dbReference type="RefSeq" id="YP_428822.1">
    <property type="nucleotide sequence ID" value="NC_007643.1"/>
</dbReference>
<dbReference type="SMR" id="Q2RMW0"/>
<dbReference type="STRING" id="269796.Rru_A3741"/>
<dbReference type="EnsemblBacteria" id="ABC24535">
    <property type="protein sequence ID" value="ABC24535"/>
    <property type="gene ID" value="Rru_A3741"/>
</dbReference>
<dbReference type="KEGG" id="rru:Rru_A3741"/>
<dbReference type="PATRIC" id="fig|269796.9.peg.3866"/>
<dbReference type="eggNOG" id="COG0337">
    <property type="taxonomic scope" value="Bacteria"/>
</dbReference>
<dbReference type="HOGENOM" id="CLU_001201_0_2_5"/>
<dbReference type="PhylomeDB" id="Q2RMW0"/>
<dbReference type="UniPathway" id="UPA00053">
    <property type="reaction ID" value="UER00085"/>
</dbReference>
<dbReference type="Proteomes" id="UP000001929">
    <property type="component" value="Chromosome"/>
</dbReference>
<dbReference type="GO" id="GO:0005737">
    <property type="term" value="C:cytoplasm"/>
    <property type="evidence" value="ECO:0007669"/>
    <property type="project" value="UniProtKB-SubCell"/>
</dbReference>
<dbReference type="GO" id="GO:0003856">
    <property type="term" value="F:3-dehydroquinate synthase activity"/>
    <property type="evidence" value="ECO:0007669"/>
    <property type="project" value="UniProtKB-UniRule"/>
</dbReference>
<dbReference type="GO" id="GO:0046872">
    <property type="term" value="F:metal ion binding"/>
    <property type="evidence" value="ECO:0007669"/>
    <property type="project" value="UniProtKB-KW"/>
</dbReference>
<dbReference type="GO" id="GO:0000166">
    <property type="term" value="F:nucleotide binding"/>
    <property type="evidence" value="ECO:0007669"/>
    <property type="project" value="UniProtKB-KW"/>
</dbReference>
<dbReference type="GO" id="GO:0008652">
    <property type="term" value="P:amino acid biosynthetic process"/>
    <property type="evidence" value="ECO:0007669"/>
    <property type="project" value="UniProtKB-KW"/>
</dbReference>
<dbReference type="GO" id="GO:0009073">
    <property type="term" value="P:aromatic amino acid family biosynthetic process"/>
    <property type="evidence" value="ECO:0007669"/>
    <property type="project" value="UniProtKB-KW"/>
</dbReference>
<dbReference type="GO" id="GO:0009423">
    <property type="term" value="P:chorismate biosynthetic process"/>
    <property type="evidence" value="ECO:0007669"/>
    <property type="project" value="UniProtKB-UniRule"/>
</dbReference>
<dbReference type="CDD" id="cd08195">
    <property type="entry name" value="DHQS"/>
    <property type="match status" value="1"/>
</dbReference>
<dbReference type="FunFam" id="3.40.50.1970:FF:000001">
    <property type="entry name" value="3-dehydroquinate synthase"/>
    <property type="match status" value="1"/>
</dbReference>
<dbReference type="Gene3D" id="3.40.50.1970">
    <property type="match status" value="1"/>
</dbReference>
<dbReference type="Gene3D" id="1.20.1090.10">
    <property type="entry name" value="Dehydroquinate synthase-like - alpha domain"/>
    <property type="match status" value="1"/>
</dbReference>
<dbReference type="HAMAP" id="MF_00110">
    <property type="entry name" value="DHQ_synthase"/>
    <property type="match status" value="1"/>
</dbReference>
<dbReference type="InterPro" id="IPR050071">
    <property type="entry name" value="Dehydroquinate_synthase"/>
</dbReference>
<dbReference type="InterPro" id="IPR016037">
    <property type="entry name" value="DHQ_synth_AroB"/>
</dbReference>
<dbReference type="InterPro" id="IPR030963">
    <property type="entry name" value="DHQ_synth_fam"/>
</dbReference>
<dbReference type="InterPro" id="IPR030960">
    <property type="entry name" value="DHQS/DOIS_N"/>
</dbReference>
<dbReference type="InterPro" id="IPR056179">
    <property type="entry name" value="DHQS_C"/>
</dbReference>
<dbReference type="NCBIfam" id="TIGR01357">
    <property type="entry name" value="aroB"/>
    <property type="match status" value="1"/>
</dbReference>
<dbReference type="PANTHER" id="PTHR43622">
    <property type="entry name" value="3-DEHYDROQUINATE SYNTHASE"/>
    <property type="match status" value="1"/>
</dbReference>
<dbReference type="PANTHER" id="PTHR43622:SF7">
    <property type="entry name" value="3-DEHYDROQUINATE SYNTHASE, CHLOROPLASTIC"/>
    <property type="match status" value="1"/>
</dbReference>
<dbReference type="Pfam" id="PF01761">
    <property type="entry name" value="DHQ_synthase"/>
    <property type="match status" value="1"/>
</dbReference>
<dbReference type="Pfam" id="PF24621">
    <property type="entry name" value="DHQS_C"/>
    <property type="match status" value="1"/>
</dbReference>
<dbReference type="PIRSF" id="PIRSF001455">
    <property type="entry name" value="DHQ_synth"/>
    <property type="match status" value="1"/>
</dbReference>
<dbReference type="SUPFAM" id="SSF56796">
    <property type="entry name" value="Dehydroquinate synthase-like"/>
    <property type="match status" value="1"/>
</dbReference>
<reference key="1">
    <citation type="journal article" date="2011" name="Stand. Genomic Sci.">
        <title>Complete genome sequence of Rhodospirillum rubrum type strain (S1).</title>
        <authorList>
            <person name="Munk A.C."/>
            <person name="Copeland A."/>
            <person name="Lucas S."/>
            <person name="Lapidus A."/>
            <person name="Del Rio T.G."/>
            <person name="Barry K."/>
            <person name="Detter J.C."/>
            <person name="Hammon N."/>
            <person name="Israni S."/>
            <person name="Pitluck S."/>
            <person name="Brettin T."/>
            <person name="Bruce D."/>
            <person name="Han C."/>
            <person name="Tapia R."/>
            <person name="Gilna P."/>
            <person name="Schmutz J."/>
            <person name="Larimer F."/>
            <person name="Land M."/>
            <person name="Kyrpides N.C."/>
            <person name="Mavromatis K."/>
            <person name="Richardson P."/>
            <person name="Rohde M."/>
            <person name="Goeker M."/>
            <person name="Klenk H.P."/>
            <person name="Zhang Y."/>
            <person name="Roberts G.P."/>
            <person name="Reslewic S."/>
            <person name="Schwartz D.C."/>
        </authorList>
    </citation>
    <scope>NUCLEOTIDE SEQUENCE [LARGE SCALE GENOMIC DNA]</scope>
    <source>
        <strain>ATCC 11170 / ATH 1.1.1 / DSM 467 / LMG 4362 / NCIMB 8255 / S1</strain>
    </source>
</reference>
<feature type="chain" id="PRO_0000231122" description="3-dehydroquinate synthase">
    <location>
        <begin position="1"/>
        <end position="385"/>
    </location>
</feature>
<feature type="binding site" evidence="1">
    <location>
        <begin position="122"/>
        <end position="126"/>
    </location>
    <ligand>
        <name>NAD(+)</name>
        <dbReference type="ChEBI" id="CHEBI:57540"/>
    </ligand>
</feature>
<feature type="binding site" evidence="1">
    <location>
        <begin position="146"/>
        <end position="147"/>
    </location>
    <ligand>
        <name>NAD(+)</name>
        <dbReference type="ChEBI" id="CHEBI:57540"/>
    </ligand>
</feature>
<feature type="binding site" evidence="1">
    <location>
        <position position="159"/>
    </location>
    <ligand>
        <name>NAD(+)</name>
        <dbReference type="ChEBI" id="CHEBI:57540"/>
    </ligand>
</feature>
<feature type="binding site" evidence="1">
    <location>
        <position position="168"/>
    </location>
    <ligand>
        <name>NAD(+)</name>
        <dbReference type="ChEBI" id="CHEBI:57540"/>
    </ligand>
</feature>
<feature type="binding site" evidence="1">
    <location>
        <position position="201"/>
    </location>
    <ligand>
        <name>Zn(2+)</name>
        <dbReference type="ChEBI" id="CHEBI:29105"/>
    </ligand>
</feature>
<feature type="binding site" evidence="1">
    <location>
        <position position="264"/>
    </location>
    <ligand>
        <name>Zn(2+)</name>
        <dbReference type="ChEBI" id="CHEBI:29105"/>
    </ligand>
</feature>
<feature type="binding site" evidence="1">
    <location>
        <position position="282"/>
    </location>
    <ligand>
        <name>Zn(2+)</name>
        <dbReference type="ChEBI" id="CHEBI:29105"/>
    </ligand>
</feature>
<comment type="function">
    <text evidence="1">Catalyzes the conversion of 3-deoxy-D-arabino-heptulosonate 7-phosphate (DAHP) to dehydroquinate (DHQ).</text>
</comment>
<comment type="catalytic activity">
    <reaction evidence="1">
        <text>7-phospho-2-dehydro-3-deoxy-D-arabino-heptonate = 3-dehydroquinate + phosphate</text>
        <dbReference type="Rhea" id="RHEA:21968"/>
        <dbReference type="ChEBI" id="CHEBI:32364"/>
        <dbReference type="ChEBI" id="CHEBI:43474"/>
        <dbReference type="ChEBI" id="CHEBI:58394"/>
        <dbReference type="EC" id="4.2.3.4"/>
    </reaction>
</comment>
<comment type="cofactor">
    <cofactor evidence="1">
        <name>Co(2+)</name>
        <dbReference type="ChEBI" id="CHEBI:48828"/>
    </cofactor>
    <cofactor evidence="1">
        <name>Zn(2+)</name>
        <dbReference type="ChEBI" id="CHEBI:29105"/>
    </cofactor>
    <text evidence="1">Binds 1 divalent metal cation per subunit. Can use either Co(2+) or Zn(2+).</text>
</comment>
<comment type="cofactor">
    <cofactor evidence="1">
        <name>NAD(+)</name>
        <dbReference type="ChEBI" id="CHEBI:57540"/>
    </cofactor>
</comment>
<comment type="pathway">
    <text evidence="1">Metabolic intermediate biosynthesis; chorismate biosynthesis; chorismate from D-erythrose 4-phosphate and phosphoenolpyruvate: step 2/7.</text>
</comment>
<comment type="subcellular location">
    <subcellularLocation>
        <location evidence="1">Cytoplasm</location>
    </subcellularLocation>
</comment>
<comment type="similarity">
    <text evidence="1">Belongs to the sugar phosphate cyclases superfamily. Dehydroquinate synthase family.</text>
</comment>
<organism>
    <name type="scientific">Rhodospirillum rubrum (strain ATCC 11170 / ATH 1.1.1 / DSM 467 / LMG 4362 / NCIMB 8255 / S1)</name>
    <dbReference type="NCBI Taxonomy" id="269796"/>
    <lineage>
        <taxon>Bacteria</taxon>
        <taxon>Pseudomonadati</taxon>
        <taxon>Pseudomonadota</taxon>
        <taxon>Alphaproteobacteria</taxon>
        <taxon>Rhodospirillales</taxon>
        <taxon>Rhodospirillaceae</taxon>
        <taxon>Rhodospirillum</taxon>
    </lineage>
</organism>
<evidence type="ECO:0000255" key="1">
    <source>
        <dbReference type="HAMAP-Rule" id="MF_00110"/>
    </source>
</evidence>
<name>AROB_RHORT</name>
<keyword id="KW-0028">Amino-acid biosynthesis</keyword>
<keyword id="KW-0057">Aromatic amino acid biosynthesis</keyword>
<keyword id="KW-0170">Cobalt</keyword>
<keyword id="KW-0963">Cytoplasm</keyword>
<keyword id="KW-0456">Lyase</keyword>
<keyword id="KW-0479">Metal-binding</keyword>
<keyword id="KW-0520">NAD</keyword>
<keyword id="KW-0547">Nucleotide-binding</keyword>
<keyword id="KW-1185">Reference proteome</keyword>
<keyword id="KW-0862">Zinc</keyword>
<protein>
    <recommendedName>
        <fullName evidence="1">3-dehydroquinate synthase</fullName>
        <shortName evidence="1">DHQS</shortName>
        <ecNumber evidence="1">4.2.3.4</ecNumber>
    </recommendedName>
</protein>
<gene>
    <name evidence="1" type="primary">aroB</name>
    <name type="ordered locus">Rru_A3741</name>
</gene>
<sequence length="385" mass="40260">MSPDTAADAAADPALQSSVLTVSLGERSYPIHIGPGLLGRAGALIAPLLRKPRVFVVTDATVAALHLDPLLASLGAAGIAHDHVVLPAGEATKSFSQLEELLDLLLAARFERSTTLLALGGGVIGDLVGFAAAILLRGVDFIQIPTTLLAQVDSSVGGKTGINTAYGKNLVGAFHQPRLVLADTTVLDTLPRRELLAGYGEVVKYGVIDDPAFFDWLEEHGSALIAGDGGARIHAVLTACRAKARVVAEDEREGGRRALLNLGHTFGHALEAETGFGPTLLHGEAVALGMVMALDLSVRLGLCPPADAARLRAHLDHVGLPTDPRRLEGAPAWNAERLLAAMDHDKKVEDGKVTFVLARGIGRSLLWREADTASVLATLRAAVAP</sequence>